<sequence length="194" mass="21207">MRYPESLLKLTRALSRLPGIGPKTAQRLALHLAFHKEEAEALAEALEGIKRVRACRECGNLAEGELCPICQDEDRDRSLLAVVESVADLYALERSGEFRGLYHVLGGALNPLEGIGPKELNLEGLFRRLEGVEEVVLATSMTVEGEATALYLAEELKKRGVRVTRPAYGLPVGGSLEYADEVTLGRALEGRRPV</sequence>
<accession>Q5SHY0</accession>
<gene>
    <name evidence="1" type="primary">recR</name>
    <name type="ordered locus">TTHA1600</name>
</gene>
<evidence type="ECO:0000255" key="1">
    <source>
        <dbReference type="HAMAP-Rule" id="MF_00017"/>
    </source>
</evidence>
<evidence type="ECO:0007829" key="2">
    <source>
        <dbReference type="PDB" id="5ZVQ"/>
    </source>
</evidence>
<comment type="function">
    <text evidence="1">May play a role in DNA repair. It seems to be involved in an RecBC-independent recombinational process of DNA repair. It may act with RecF and RecO.</text>
</comment>
<comment type="similarity">
    <text evidence="1">Belongs to the RecR family.</text>
</comment>
<name>RECR_THET8</name>
<dbReference type="EMBL" id="AP008226">
    <property type="protein sequence ID" value="BAD71423.1"/>
    <property type="molecule type" value="Genomic_DNA"/>
</dbReference>
<dbReference type="RefSeq" id="WP_011228798.1">
    <property type="nucleotide sequence ID" value="NC_006461.1"/>
</dbReference>
<dbReference type="RefSeq" id="YP_144866.1">
    <property type="nucleotide sequence ID" value="NC_006461.1"/>
</dbReference>
<dbReference type="PDB" id="5ZVQ">
    <property type="method" value="X-ray"/>
    <property type="resolution" value="2.50 A"/>
    <property type="chains" value="A=1-194"/>
</dbReference>
<dbReference type="PDB" id="8A93">
    <property type="method" value="EM"/>
    <property type="resolution" value="3.05 A"/>
    <property type="chains" value="C/D/F=1-194"/>
</dbReference>
<dbReference type="PDB" id="8AB0">
    <property type="method" value="EM"/>
    <property type="resolution" value="6.09 A"/>
    <property type="chains" value="C/D/E/F=1-194"/>
</dbReference>
<dbReference type="PDB" id="8BPR">
    <property type="method" value="EM"/>
    <property type="resolution" value="3.65 A"/>
    <property type="chains" value="C/D/E/F=1-194"/>
</dbReference>
<dbReference type="PDBsum" id="5ZVQ"/>
<dbReference type="PDBsum" id="8A93"/>
<dbReference type="PDBsum" id="8AB0"/>
<dbReference type="PDBsum" id="8BPR"/>
<dbReference type="BMRB" id="Q5SHY0"/>
<dbReference type="EMDB" id="EMD-15267"/>
<dbReference type="EMDB" id="EMD-15308"/>
<dbReference type="EMDB" id="EMD-16164"/>
<dbReference type="SMR" id="Q5SHY0"/>
<dbReference type="EnsemblBacteria" id="BAD71423">
    <property type="protein sequence ID" value="BAD71423"/>
    <property type="gene ID" value="BAD71423"/>
</dbReference>
<dbReference type="GeneID" id="3169139"/>
<dbReference type="KEGG" id="ttj:TTHA1600"/>
<dbReference type="PATRIC" id="fig|300852.9.peg.1570"/>
<dbReference type="eggNOG" id="COG0353">
    <property type="taxonomic scope" value="Bacteria"/>
</dbReference>
<dbReference type="HOGENOM" id="CLU_060739_1_0_0"/>
<dbReference type="PhylomeDB" id="Q5SHY0"/>
<dbReference type="Proteomes" id="UP000000532">
    <property type="component" value="Chromosome"/>
</dbReference>
<dbReference type="GO" id="GO:0003677">
    <property type="term" value="F:DNA binding"/>
    <property type="evidence" value="ECO:0007669"/>
    <property type="project" value="UniProtKB-UniRule"/>
</dbReference>
<dbReference type="GO" id="GO:0008270">
    <property type="term" value="F:zinc ion binding"/>
    <property type="evidence" value="ECO:0007669"/>
    <property type="project" value="UniProtKB-KW"/>
</dbReference>
<dbReference type="GO" id="GO:0006310">
    <property type="term" value="P:DNA recombination"/>
    <property type="evidence" value="ECO:0007669"/>
    <property type="project" value="UniProtKB-UniRule"/>
</dbReference>
<dbReference type="GO" id="GO:0006281">
    <property type="term" value="P:DNA repair"/>
    <property type="evidence" value="ECO:0007669"/>
    <property type="project" value="UniProtKB-UniRule"/>
</dbReference>
<dbReference type="CDD" id="cd01025">
    <property type="entry name" value="TOPRIM_recR"/>
    <property type="match status" value="1"/>
</dbReference>
<dbReference type="Gene3D" id="3.30.60.80">
    <property type="match status" value="1"/>
</dbReference>
<dbReference type="Gene3D" id="3.40.1360.10">
    <property type="match status" value="1"/>
</dbReference>
<dbReference type="Gene3D" id="6.10.250.240">
    <property type="match status" value="1"/>
</dbReference>
<dbReference type="Gene3D" id="1.10.8.420">
    <property type="entry name" value="RecR Domain 1"/>
    <property type="match status" value="1"/>
</dbReference>
<dbReference type="HAMAP" id="MF_00017">
    <property type="entry name" value="RecR"/>
    <property type="match status" value="1"/>
</dbReference>
<dbReference type="InterPro" id="IPR000093">
    <property type="entry name" value="DNA_Rcmb_RecR"/>
</dbReference>
<dbReference type="InterPro" id="IPR003583">
    <property type="entry name" value="Hlx-hairpin-Hlx_DNA-bd_motif"/>
</dbReference>
<dbReference type="InterPro" id="IPR023627">
    <property type="entry name" value="Rcmb_RecR"/>
</dbReference>
<dbReference type="InterPro" id="IPR015967">
    <property type="entry name" value="Rcmb_RecR_Znf"/>
</dbReference>
<dbReference type="InterPro" id="IPR006171">
    <property type="entry name" value="TOPRIM_dom"/>
</dbReference>
<dbReference type="InterPro" id="IPR034137">
    <property type="entry name" value="TOPRIM_RecR"/>
</dbReference>
<dbReference type="NCBIfam" id="TIGR00615">
    <property type="entry name" value="recR"/>
    <property type="match status" value="1"/>
</dbReference>
<dbReference type="PANTHER" id="PTHR30446">
    <property type="entry name" value="RECOMBINATION PROTEIN RECR"/>
    <property type="match status" value="1"/>
</dbReference>
<dbReference type="PANTHER" id="PTHR30446:SF0">
    <property type="entry name" value="RECOMBINATION PROTEIN RECR"/>
    <property type="match status" value="1"/>
</dbReference>
<dbReference type="Pfam" id="PF21175">
    <property type="entry name" value="RecR_C"/>
    <property type="match status" value="1"/>
</dbReference>
<dbReference type="Pfam" id="PF21176">
    <property type="entry name" value="RecR_HhH"/>
    <property type="match status" value="1"/>
</dbReference>
<dbReference type="Pfam" id="PF02132">
    <property type="entry name" value="RecR_ZnF"/>
    <property type="match status" value="1"/>
</dbReference>
<dbReference type="Pfam" id="PF13662">
    <property type="entry name" value="Toprim_4"/>
    <property type="match status" value="1"/>
</dbReference>
<dbReference type="SMART" id="SM00278">
    <property type="entry name" value="HhH1"/>
    <property type="match status" value="1"/>
</dbReference>
<dbReference type="SMART" id="SM00493">
    <property type="entry name" value="TOPRIM"/>
    <property type="match status" value="1"/>
</dbReference>
<dbReference type="SUPFAM" id="SSF111304">
    <property type="entry name" value="Recombination protein RecR"/>
    <property type="match status" value="1"/>
</dbReference>
<dbReference type="PROSITE" id="PS01300">
    <property type="entry name" value="RECR"/>
    <property type="match status" value="1"/>
</dbReference>
<dbReference type="PROSITE" id="PS50880">
    <property type="entry name" value="TOPRIM"/>
    <property type="match status" value="1"/>
</dbReference>
<reference key="1">
    <citation type="submission" date="2004-11" db="EMBL/GenBank/DDBJ databases">
        <title>Complete genome sequence of Thermus thermophilus HB8.</title>
        <authorList>
            <person name="Masui R."/>
            <person name="Kurokawa K."/>
            <person name="Nakagawa N."/>
            <person name="Tokunaga F."/>
            <person name="Koyama Y."/>
            <person name="Shibata T."/>
            <person name="Oshima T."/>
            <person name="Yokoyama S."/>
            <person name="Yasunaga T."/>
            <person name="Kuramitsu S."/>
        </authorList>
    </citation>
    <scope>NUCLEOTIDE SEQUENCE [LARGE SCALE GENOMIC DNA]</scope>
    <source>
        <strain>ATCC 27634 / DSM 579 / HB8</strain>
    </source>
</reference>
<feature type="chain" id="PRO_0000190413" description="Recombination protein RecR">
    <location>
        <begin position="1"/>
        <end position="194"/>
    </location>
</feature>
<feature type="domain" description="Toprim" evidence="1">
    <location>
        <begin position="78"/>
        <end position="171"/>
    </location>
</feature>
<feature type="zinc finger region" description="C4-type" evidence="1">
    <location>
        <begin position="55"/>
        <end position="70"/>
    </location>
</feature>
<feature type="helix" evidence="2">
    <location>
        <begin position="5"/>
        <end position="15"/>
    </location>
</feature>
<feature type="helix" evidence="2">
    <location>
        <begin position="22"/>
        <end position="34"/>
    </location>
</feature>
<feature type="helix" evidence="2">
    <location>
        <begin position="36"/>
        <end position="48"/>
    </location>
</feature>
<feature type="strand" evidence="2">
    <location>
        <begin position="56"/>
        <end position="58"/>
    </location>
</feature>
<feature type="strand" evidence="2">
    <location>
        <begin position="60"/>
        <end position="66"/>
    </location>
</feature>
<feature type="turn" evidence="2">
    <location>
        <begin position="68"/>
        <end position="71"/>
    </location>
</feature>
<feature type="strand" evidence="2">
    <location>
        <begin position="79"/>
        <end position="84"/>
    </location>
</feature>
<feature type="helix" evidence="2">
    <location>
        <begin position="86"/>
        <end position="95"/>
    </location>
</feature>
<feature type="strand" evidence="2">
    <location>
        <begin position="100"/>
        <end position="104"/>
    </location>
</feature>
<feature type="helix" evidence="2">
    <location>
        <begin position="111"/>
        <end position="113"/>
    </location>
</feature>
<feature type="turn" evidence="2">
    <location>
        <begin position="117"/>
        <end position="121"/>
    </location>
</feature>
<feature type="helix" evidence="2">
    <location>
        <begin position="125"/>
        <end position="128"/>
    </location>
</feature>
<feature type="strand" evidence="2">
    <location>
        <begin position="134"/>
        <end position="137"/>
    </location>
</feature>
<feature type="helix" evidence="2">
    <location>
        <begin position="143"/>
        <end position="158"/>
    </location>
</feature>
<feature type="strand" evidence="2">
    <location>
        <begin position="162"/>
        <end position="164"/>
    </location>
</feature>
<feature type="turn" evidence="2">
    <location>
        <begin position="176"/>
        <end position="178"/>
    </location>
</feature>
<feature type="helix" evidence="2">
    <location>
        <begin position="181"/>
        <end position="189"/>
    </location>
</feature>
<organism>
    <name type="scientific">Thermus thermophilus (strain ATCC 27634 / DSM 579 / HB8)</name>
    <dbReference type="NCBI Taxonomy" id="300852"/>
    <lineage>
        <taxon>Bacteria</taxon>
        <taxon>Thermotogati</taxon>
        <taxon>Deinococcota</taxon>
        <taxon>Deinococci</taxon>
        <taxon>Thermales</taxon>
        <taxon>Thermaceae</taxon>
        <taxon>Thermus</taxon>
    </lineage>
</organism>
<protein>
    <recommendedName>
        <fullName evidence="1">Recombination protein RecR</fullName>
    </recommendedName>
</protein>
<keyword id="KW-0002">3D-structure</keyword>
<keyword id="KW-0227">DNA damage</keyword>
<keyword id="KW-0233">DNA recombination</keyword>
<keyword id="KW-0234">DNA repair</keyword>
<keyword id="KW-0479">Metal-binding</keyword>
<keyword id="KW-1185">Reference proteome</keyword>
<keyword id="KW-0862">Zinc</keyword>
<keyword id="KW-0863">Zinc-finger</keyword>
<proteinExistence type="evidence at protein level"/>